<accession>Q94KJ7</accession>
<accession>Q9SV35</accession>
<proteinExistence type="evidence at protein level"/>
<keyword id="KW-0007">Acetylation</keyword>
<keyword id="KW-0025">Alternative splicing</keyword>
<keyword id="KW-0472">Membrane</keyword>
<keyword id="KW-1185">Reference proteome</keyword>
<keyword id="KW-0926">Vacuole</keyword>
<organism>
    <name type="scientific">Arabidopsis thaliana</name>
    <name type="common">Mouse-ear cress</name>
    <dbReference type="NCBI Taxonomy" id="3702"/>
    <lineage>
        <taxon>Eukaryota</taxon>
        <taxon>Viridiplantae</taxon>
        <taxon>Streptophyta</taxon>
        <taxon>Embryophyta</taxon>
        <taxon>Tracheophyta</taxon>
        <taxon>Spermatophyta</taxon>
        <taxon>Magnoliopsida</taxon>
        <taxon>eudicotyledons</taxon>
        <taxon>Gunneridae</taxon>
        <taxon>Pentapetalae</taxon>
        <taxon>rosids</taxon>
        <taxon>malvids</taxon>
        <taxon>Brassicales</taxon>
        <taxon>Brassicaceae</taxon>
        <taxon>Camelineae</taxon>
        <taxon>Arabidopsis</taxon>
    </lineage>
</organism>
<feature type="initiator methionine" description="Removed" evidence="4">
    <location>
        <position position="1"/>
    </location>
</feature>
<feature type="chain" id="PRO_0000206309" description="Vacuolar protein-sorting-associated protein 33 homolog">
    <location>
        <begin position="2"/>
        <end position="592"/>
    </location>
</feature>
<feature type="modified residue" description="N-acetylalanine" evidence="4">
    <location>
        <position position="2"/>
    </location>
</feature>
<reference key="1">
    <citation type="journal article" date="2003" name="Mol. Biol. Cell">
        <title>The AtC-VPS protein complex is localized to the tonoplast and the prevacuolar compartment in arabidopsis.</title>
        <authorList>
            <person name="Rojo E."/>
            <person name="Zouhar J."/>
            <person name="Kovaleva V."/>
            <person name="Hong S."/>
            <person name="Raikhel N.V."/>
        </authorList>
    </citation>
    <scope>NUCLEOTIDE SEQUENCE [MRNA]</scope>
    <scope>FUNCTION</scope>
    <scope>IDENTIFICATION IN THE C-VSP COMPLEX</scope>
    <scope>TISSUE SPECIFICITY</scope>
    <scope>SUBCELLULAR LOCATION</scope>
</reference>
<reference key="2">
    <citation type="journal article" date="2000" name="Nature">
        <title>Sequence and analysis of chromosome 3 of the plant Arabidopsis thaliana.</title>
        <authorList>
            <person name="Salanoubat M."/>
            <person name="Lemcke K."/>
            <person name="Rieger M."/>
            <person name="Ansorge W."/>
            <person name="Unseld M."/>
            <person name="Fartmann B."/>
            <person name="Valle G."/>
            <person name="Bloecker H."/>
            <person name="Perez-Alonso M."/>
            <person name="Obermaier B."/>
            <person name="Delseny M."/>
            <person name="Boutry M."/>
            <person name="Grivell L.A."/>
            <person name="Mache R."/>
            <person name="Puigdomenech P."/>
            <person name="De Simone V."/>
            <person name="Choisne N."/>
            <person name="Artiguenave F."/>
            <person name="Robert C."/>
            <person name="Brottier P."/>
            <person name="Wincker P."/>
            <person name="Cattolico L."/>
            <person name="Weissenbach J."/>
            <person name="Saurin W."/>
            <person name="Quetier F."/>
            <person name="Schaefer M."/>
            <person name="Mueller-Auer S."/>
            <person name="Gabel C."/>
            <person name="Fuchs M."/>
            <person name="Benes V."/>
            <person name="Wurmbach E."/>
            <person name="Drzonek H."/>
            <person name="Erfle H."/>
            <person name="Jordan N."/>
            <person name="Bangert S."/>
            <person name="Wiedelmann R."/>
            <person name="Kranz H."/>
            <person name="Voss H."/>
            <person name="Holland R."/>
            <person name="Brandt P."/>
            <person name="Nyakatura G."/>
            <person name="Vezzi A."/>
            <person name="D'Angelo M."/>
            <person name="Pallavicini A."/>
            <person name="Toppo S."/>
            <person name="Simionati B."/>
            <person name="Conrad A."/>
            <person name="Hornischer K."/>
            <person name="Kauer G."/>
            <person name="Loehnert T.-H."/>
            <person name="Nordsiek G."/>
            <person name="Reichelt J."/>
            <person name="Scharfe M."/>
            <person name="Schoen O."/>
            <person name="Bargues M."/>
            <person name="Terol J."/>
            <person name="Climent J."/>
            <person name="Navarro P."/>
            <person name="Collado C."/>
            <person name="Perez-Perez A."/>
            <person name="Ottenwaelder B."/>
            <person name="Duchemin D."/>
            <person name="Cooke R."/>
            <person name="Laudie M."/>
            <person name="Berger-Llauro C."/>
            <person name="Purnelle B."/>
            <person name="Masuy D."/>
            <person name="de Haan M."/>
            <person name="Maarse A.C."/>
            <person name="Alcaraz J.-P."/>
            <person name="Cottet A."/>
            <person name="Casacuberta E."/>
            <person name="Monfort A."/>
            <person name="Argiriou A."/>
            <person name="Flores M."/>
            <person name="Liguori R."/>
            <person name="Vitale D."/>
            <person name="Mannhaupt G."/>
            <person name="Haase D."/>
            <person name="Schoof H."/>
            <person name="Rudd S."/>
            <person name="Zaccaria P."/>
            <person name="Mewes H.-W."/>
            <person name="Mayer K.F.X."/>
            <person name="Kaul S."/>
            <person name="Town C.D."/>
            <person name="Koo H.L."/>
            <person name="Tallon L.J."/>
            <person name="Jenkins J."/>
            <person name="Rooney T."/>
            <person name="Rizzo M."/>
            <person name="Walts A."/>
            <person name="Utterback T."/>
            <person name="Fujii C.Y."/>
            <person name="Shea T.P."/>
            <person name="Creasy T.H."/>
            <person name="Haas B."/>
            <person name="Maiti R."/>
            <person name="Wu D."/>
            <person name="Peterson J."/>
            <person name="Van Aken S."/>
            <person name="Pai G."/>
            <person name="Militscher J."/>
            <person name="Sellers P."/>
            <person name="Gill J.E."/>
            <person name="Feldblyum T.V."/>
            <person name="Preuss D."/>
            <person name="Lin X."/>
            <person name="Nierman W.C."/>
            <person name="Salzberg S.L."/>
            <person name="White O."/>
            <person name="Venter J.C."/>
            <person name="Fraser C.M."/>
            <person name="Kaneko T."/>
            <person name="Nakamura Y."/>
            <person name="Sato S."/>
            <person name="Kato T."/>
            <person name="Asamizu E."/>
            <person name="Sasamoto S."/>
            <person name="Kimura T."/>
            <person name="Idesawa K."/>
            <person name="Kawashima K."/>
            <person name="Kishida Y."/>
            <person name="Kiyokawa C."/>
            <person name="Kohara M."/>
            <person name="Matsumoto M."/>
            <person name="Matsuno A."/>
            <person name="Muraki A."/>
            <person name="Nakayama S."/>
            <person name="Nakazaki N."/>
            <person name="Shinpo S."/>
            <person name="Takeuchi C."/>
            <person name="Wada T."/>
            <person name="Watanabe A."/>
            <person name="Yamada M."/>
            <person name="Yasuda M."/>
            <person name="Tabata S."/>
        </authorList>
    </citation>
    <scope>NUCLEOTIDE SEQUENCE [LARGE SCALE GENOMIC DNA]</scope>
    <source>
        <strain>cv. Columbia</strain>
    </source>
</reference>
<reference key="3">
    <citation type="journal article" date="2017" name="Plant J.">
        <title>Araport11: a complete reannotation of the Arabidopsis thaliana reference genome.</title>
        <authorList>
            <person name="Cheng C.Y."/>
            <person name="Krishnakumar V."/>
            <person name="Chan A.P."/>
            <person name="Thibaud-Nissen F."/>
            <person name="Schobel S."/>
            <person name="Town C.D."/>
        </authorList>
    </citation>
    <scope>GENOME REANNOTATION</scope>
    <source>
        <strain>cv. Columbia</strain>
    </source>
</reference>
<reference key="4">
    <citation type="journal article" date="2012" name="Mol. Cell. Proteomics">
        <title>Comparative large-scale characterisation of plant vs. mammal proteins reveals similar and idiosyncratic N-alpha acetylation features.</title>
        <authorList>
            <person name="Bienvenut W.V."/>
            <person name="Sumpton D."/>
            <person name="Martinez A."/>
            <person name="Lilla S."/>
            <person name="Espagne C."/>
            <person name="Meinnel T."/>
            <person name="Giglione C."/>
        </authorList>
    </citation>
    <scope>ACETYLATION [LARGE SCALE ANALYSIS] AT ALA-2</scope>
    <scope>CLEAVAGE OF INITIATOR METHIONINE [LARGE SCALE ANALYSIS]</scope>
    <scope>IDENTIFICATION BY MASS SPECTROMETRY [LARGE SCALE ANALYSIS]</scope>
</reference>
<reference key="5">
    <citation type="journal article" date="2018" name="Proc. Natl. Acad. Sci. U.S.A.">
        <title>Distinct sets of tethering complexes, SNARE complexes, and Rab GTPases mediate membrane fusion at the vacuole in Arabidopsis.</title>
        <authorList>
            <person name="Takemoto K."/>
            <person name="Ebine K."/>
            <person name="Askani J.C."/>
            <person name="Krueger F."/>
            <person name="Gonzalez Z.A."/>
            <person name="Ito E."/>
            <person name="Goh T."/>
            <person name="Schumacher K."/>
            <person name="Nakano A."/>
            <person name="Ueda T."/>
        </authorList>
    </citation>
    <scope>SUBUNIT</scope>
    <scope>IDENTIFICATION BY MASS SPECTROMETRY</scope>
</reference>
<gene>
    <name type="primary">VPS33</name>
    <name type="ordered locus">At3g54860</name>
    <name type="ORF">F28P10.160</name>
</gene>
<name>VPS33_ARATH</name>
<sequence>MAQIPSLENAPLNLKSIRDKSERELVNLLKDVRGTKCLVIDPKLSGSVSLIIPTSKLKELGLELRHLTAEPVQTECTKVVYLVRSQLSFMKFIASHIQNDIAKAIQRDYYVYFVPRRSVACEKILEQEKVHNLVTVKEFPLYMVPLDEDVISFELELSEKDCLVDGDVSSLWHIAKAIHELEFSFGVISKMRAKGKASVRVADILNRMQVEEPVNSNDVGRPEVDTLILLDREVDMVTPMCSQLTYEGLIDEILHISNGAVEVDSSVMGAQQEGKKMKVPLNSSDKLFKETRDLNFEVVVQVLRQKAMTMKEDYTEINSTQTVSELKDFVKKLNSLPEMTRHIHLAQHLTTFTSKQSFNSQLDMEQTLVEAENYDICYEYIEEMIHKQEPLTNVLRLLVLFSVTNSGLPKKQFDYIRMELLHSYGFEHVVTLNNLEKAGLLKKQEFKSNWLTVKRTLKLIVEDTDTSRPNDIAYVYSGYAPLSIRLIQQAIHSGWRPMEDILKLLPGPHLETKRSGFPSSPSVDSLHGASNGVADGRRSIVLVVFIGGVTFAEISALRYLASKEGMAYDLIVATTKIVNGATLIETFMEKLG</sequence>
<comment type="function">
    <text evidence="1">Involved in regulating membrane fusion at the tonoplast and the prevacuolar compartment.</text>
</comment>
<comment type="subunit">
    <text evidence="1 2">Core component of at least two putative endosomal tethering complexes, the homotypic fusion and vacuole protein sorting (HOPS) complex and the class C core vacuole/endosome tethering (CORVET) complex. Their common core is composed of the class C Vps proteins VPS11, VCL1, VPS18 and VPS33, which in HOPS further associates with VPS39 and VPS41 and in CORVET with VPS3.</text>
</comment>
<comment type="subcellular location">
    <subcellularLocation>
        <location evidence="1">Vacuole membrane</location>
        <topology evidence="1">Peripheral membrane protein</topology>
    </subcellularLocation>
    <subcellularLocation>
        <location evidence="1">Prevacuolar compartment membrane</location>
        <topology evidence="1">Peripheral membrane protein</topology>
    </subcellularLocation>
</comment>
<comment type="alternative products">
    <event type="alternative splicing"/>
    <isoform>
        <id>Q94KJ7-1</id>
        <name>1</name>
        <sequence type="displayed"/>
    </isoform>
    <text>A number of isoforms are produced. According to EST sequences.</text>
</comment>
<comment type="tissue specificity">
    <text evidence="1">Expressed in roots, leaves, stems, siliques and flowers.</text>
</comment>
<comment type="similarity">
    <text evidence="3">Belongs to the STXBP/unc-18/SEC1 family.</text>
</comment>
<comment type="sequence caution" evidence="3">
    <conflict type="erroneous gene model prediction">
        <sequence resource="EMBL-CDS" id="CAB41098"/>
    </conflict>
</comment>
<dbReference type="EMBL" id="AF357527">
    <property type="protein sequence ID" value="AAK48903.1"/>
    <property type="molecule type" value="mRNA"/>
</dbReference>
<dbReference type="EMBL" id="AL049655">
    <property type="protein sequence ID" value="CAB41098.1"/>
    <property type="status" value="ALT_SEQ"/>
    <property type="molecule type" value="Genomic_DNA"/>
</dbReference>
<dbReference type="EMBL" id="CP002686">
    <property type="protein sequence ID" value="AEE79301.1"/>
    <property type="molecule type" value="Genomic_DNA"/>
</dbReference>
<dbReference type="RefSeq" id="NP_567009.1">
    <molecule id="Q94KJ7-1"/>
    <property type="nucleotide sequence ID" value="NM_115343.4"/>
</dbReference>
<dbReference type="SMR" id="Q94KJ7"/>
<dbReference type="BioGRID" id="9967">
    <property type="interactions" value="2"/>
</dbReference>
<dbReference type="FunCoup" id="Q94KJ7">
    <property type="interactions" value="4431"/>
</dbReference>
<dbReference type="STRING" id="3702.Q94KJ7"/>
<dbReference type="iPTMnet" id="Q94KJ7"/>
<dbReference type="PaxDb" id="3702-AT3G54860.2"/>
<dbReference type="EnsemblPlants" id="AT3G54860.1">
    <molecule id="Q94KJ7-1"/>
    <property type="protein sequence ID" value="AT3G54860.1"/>
    <property type="gene ID" value="AT3G54860"/>
</dbReference>
<dbReference type="GeneID" id="824651"/>
<dbReference type="Gramene" id="AT3G54860.1">
    <molecule id="Q94KJ7-1"/>
    <property type="protein sequence ID" value="AT3G54860.1"/>
    <property type="gene ID" value="AT3G54860"/>
</dbReference>
<dbReference type="KEGG" id="ath:AT3G54860"/>
<dbReference type="Araport" id="AT3G54860"/>
<dbReference type="TAIR" id="AT3G54860">
    <property type="gene designation" value="ATVPS33"/>
</dbReference>
<dbReference type="eggNOG" id="KOG1302">
    <property type="taxonomic scope" value="Eukaryota"/>
</dbReference>
<dbReference type="InParanoid" id="Q94KJ7"/>
<dbReference type="OMA" id="EFHIFFV"/>
<dbReference type="OrthoDB" id="10262287at2759"/>
<dbReference type="PhylomeDB" id="Q94KJ7"/>
<dbReference type="PRO" id="PR:Q94KJ7"/>
<dbReference type="Proteomes" id="UP000006548">
    <property type="component" value="Chromosome 3"/>
</dbReference>
<dbReference type="ExpressionAtlas" id="Q94KJ7">
    <property type="expression patterns" value="baseline and differential"/>
</dbReference>
<dbReference type="GO" id="GO:0033263">
    <property type="term" value="C:CORVET complex"/>
    <property type="evidence" value="ECO:0000314"/>
    <property type="project" value="UniProtKB"/>
</dbReference>
<dbReference type="GO" id="GO:0030897">
    <property type="term" value="C:HOPS complex"/>
    <property type="evidence" value="ECO:0000314"/>
    <property type="project" value="UniProtKB"/>
</dbReference>
<dbReference type="GO" id="GO:0032991">
    <property type="term" value="C:protein-containing complex"/>
    <property type="evidence" value="ECO:0000353"/>
    <property type="project" value="UniProtKB"/>
</dbReference>
<dbReference type="GO" id="GO:0005774">
    <property type="term" value="C:vacuolar membrane"/>
    <property type="evidence" value="ECO:0007669"/>
    <property type="project" value="UniProtKB-SubCell"/>
</dbReference>
<dbReference type="GO" id="GO:0016192">
    <property type="term" value="P:vesicle-mediated transport"/>
    <property type="evidence" value="ECO:0007669"/>
    <property type="project" value="InterPro"/>
</dbReference>
<dbReference type="FunFam" id="1.25.40.850:FF:000002">
    <property type="entry name" value="Vacuolar protein sorting-associated protein 33A"/>
    <property type="match status" value="1"/>
</dbReference>
<dbReference type="FunFam" id="3.40.50.1910:FF:000005">
    <property type="entry name" value="vacuolar protein sorting-associated protein 33A isoform X1"/>
    <property type="match status" value="1"/>
</dbReference>
<dbReference type="FunFam" id="3.90.830.10:FF:000021">
    <property type="entry name" value="Vacuolar protein-sorting-associated protein 33 homolog"/>
    <property type="match status" value="1"/>
</dbReference>
<dbReference type="Gene3D" id="1.25.40.850">
    <property type="match status" value="1"/>
</dbReference>
<dbReference type="Gene3D" id="3.40.50.1910">
    <property type="match status" value="2"/>
</dbReference>
<dbReference type="Gene3D" id="3.40.50.2060">
    <property type="match status" value="1"/>
</dbReference>
<dbReference type="Gene3D" id="3.90.830.10">
    <property type="entry name" value="Syntaxin Binding Protein 1, Chain A, domain 2"/>
    <property type="match status" value="1"/>
</dbReference>
<dbReference type="InterPro" id="IPR043154">
    <property type="entry name" value="Sec-1-like_dom1"/>
</dbReference>
<dbReference type="InterPro" id="IPR043127">
    <property type="entry name" value="Sec-1-like_dom3a"/>
</dbReference>
<dbReference type="InterPro" id="IPR001619">
    <property type="entry name" value="Sec1-like"/>
</dbReference>
<dbReference type="InterPro" id="IPR027482">
    <property type="entry name" value="Sec1-like_dom2"/>
</dbReference>
<dbReference type="InterPro" id="IPR036045">
    <property type="entry name" value="Sec1-like_sf"/>
</dbReference>
<dbReference type="InterPro" id="IPR043155">
    <property type="entry name" value="VPS33_dom3b"/>
</dbReference>
<dbReference type="PANTHER" id="PTHR11679">
    <property type="entry name" value="VESICLE PROTEIN SORTING-ASSOCIATED"/>
    <property type="match status" value="1"/>
</dbReference>
<dbReference type="Pfam" id="PF00995">
    <property type="entry name" value="Sec1"/>
    <property type="match status" value="1"/>
</dbReference>
<dbReference type="PIRSF" id="PIRSF005715">
    <property type="entry name" value="VPS45_Sec1"/>
    <property type="match status" value="1"/>
</dbReference>
<dbReference type="SUPFAM" id="SSF56815">
    <property type="entry name" value="Sec1/munc18-like (SM) proteins"/>
    <property type="match status" value="1"/>
</dbReference>
<protein>
    <recommendedName>
        <fullName>Vacuolar protein-sorting-associated protein 33 homolog</fullName>
        <shortName>AtVPS33</shortName>
    </recommendedName>
</protein>
<evidence type="ECO:0000269" key="1">
    <source>
    </source>
</evidence>
<evidence type="ECO:0000269" key="2">
    <source>
    </source>
</evidence>
<evidence type="ECO:0000305" key="3"/>
<evidence type="ECO:0007744" key="4">
    <source>
    </source>
</evidence>